<sequence>MENSSAASASSEAGSSRSQEIEELERFIDSYVLEYQVQGLLADKTEGDGESERTQSHISQWTADCSEPLDSSCSFSRGRAPPQQNGSKDNSLDMLGTDIWAANTFDSFSGATWDLQPEKLDFTQFHRKVRHTPKQPLPHIDREGCGKGKLEDGDGINLNDIEKVLPAWQGYHPMPHEVEIAHTKKLFRRRRNDRRRQQRPPGGNKPQQHGDHQPGSAKHNRDHQKSYQGGSAPHPSGRPTHHGYSQNRRWHHGNMKHPPGDKGEAGAHRNAKETMTIENPKLEDTAGDTGHSSLEAPRSPDTLAPVASERLPPQQSGGPEVETKRKDSILPERIGERPKITLLQSSKDRLRRRLKEKDEVAVETTTPQQNKMDKLIEILNSMRNNSSDVDTKLTTFMEEAQNSTNSEEMLGEIVRTIYQKAVSDRSFAFTAAKLCDKMALFMVEGTKFRSLLLNMLQKDFTVREELQQQDVERWLGFITFLCEVFGTMRSSTGEPFRVLVCPIYTCLRELLQSQDVKEDAVLCCSMELQSTGRLLEEQLPEMMTELLASARDKMLCPSESMLTRSLLLEVIELHANSWNPLTPPITQYYNRTIQKLTA</sequence>
<accession>O43310</accession>
<accession>B3KTR8</accession>
<accession>Q8IVD5</accession>
<evidence type="ECO:0000256" key="1">
    <source>
        <dbReference type="SAM" id="MobiDB-lite"/>
    </source>
</evidence>
<evidence type="ECO:0000269" key="2">
    <source>
    </source>
</evidence>
<evidence type="ECO:0000269" key="3">
    <source>
    </source>
</evidence>
<evidence type="ECO:0000303" key="4">
    <source>
    </source>
</evidence>
<evidence type="ECO:0000305" key="5"/>
<evidence type="ECO:0007744" key="6">
    <source>
    </source>
</evidence>
<evidence type="ECO:0007744" key="7">
    <source>
    </source>
</evidence>
<evidence type="ECO:0007744" key="8">
    <source>
    </source>
</evidence>
<evidence type="ECO:0007744" key="9">
    <source>
    </source>
</evidence>
<evidence type="ECO:0007744" key="10">
    <source>
    </source>
</evidence>
<gene>
    <name type="primary">CTIF</name>
    <name type="synonym">KIAA0427</name>
</gene>
<reference key="1">
    <citation type="journal article" date="1997" name="DNA Res.">
        <title>Prediction of the coding sequences of unidentified human genes. VIII. 78 new cDNA clones from brain which code for large proteins in vitro.</title>
        <authorList>
            <person name="Ishikawa K."/>
            <person name="Nagase T."/>
            <person name="Nakajima D."/>
            <person name="Seki N."/>
            <person name="Ohira M."/>
            <person name="Miyajima N."/>
            <person name="Tanaka A."/>
            <person name="Kotani H."/>
            <person name="Nomura N."/>
            <person name="Ohara O."/>
        </authorList>
    </citation>
    <scope>NUCLEOTIDE SEQUENCE [LARGE SCALE MRNA] (ISOFORM 1)</scope>
    <source>
        <tissue>Brain</tissue>
    </source>
</reference>
<reference key="2">
    <citation type="journal article" date="2005" name="Nature">
        <title>DNA sequence and analysis of human chromosome 18.</title>
        <authorList>
            <person name="Nusbaum C."/>
            <person name="Zody M.C."/>
            <person name="Borowsky M.L."/>
            <person name="Kamal M."/>
            <person name="Kodira C.D."/>
            <person name="Taylor T.D."/>
            <person name="Whittaker C.A."/>
            <person name="Chang J.L."/>
            <person name="Cuomo C.A."/>
            <person name="Dewar K."/>
            <person name="FitzGerald M.G."/>
            <person name="Yang X."/>
            <person name="Abouelleil A."/>
            <person name="Allen N.R."/>
            <person name="Anderson S."/>
            <person name="Bloom T."/>
            <person name="Bugalter B."/>
            <person name="Butler J."/>
            <person name="Cook A."/>
            <person name="DeCaprio D."/>
            <person name="Engels R."/>
            <person name="Garber M."/>
            <person name="Gnirke A."/>
            <person name="Hafez N."/>
            <person name="Hall J.L."/>
            <person name="Norman C.H."/>
            <person name="Itoh T."/>
            <person name="Jaffe D.B."/>
            <person name="Kuroki Y."/>
            <person name="Lehoczky J."/>
            <person name="Lui A."/>
            <person name="Macdonald P."/>
            <person name="Mauceli E."/>
            <person name="Mikkelsen T.S."/>
            <person name="Naylor J.W."/>
            <person name="Nicol R."/>
            <person name="Nguyen C."/>
            <person name="Noguchi H."/>
            <person name="O'Leary S.B."/>
            <person name="Piqani B."/>
            <person name="Smith C.L."/>
            <person name="Talamas J.A."/>
            <person name="Topham K."/>
            <person name="Totoki Y."/>
            <person name="Toyoda A."/>
            <person name="Wain H.M."/>
            <person name="Young S.K."/>
            <person name="Zeng Q."/>
            <person name="Zimmer A.R."/>
            <person name="Fujiyama A."/>
            <person name="Hattori M."/>
            <person name="Birren B.W."/>
            <person name="Sakaki Y."/>
            <person name="Lander E.S."/>
        </authorList>
    </citation>
    <scope>NUCLEOTIDE SEQUENCE [LARGE SCALE GENOMIC DNA]</scope>
</reference>
<reference key="3">
    <citation type="journal article" date="2004" name="Genome Res.">
        <title>The status, quality, and expansion of the NIH full-length cDNA project: the Mammalian Gene Collection (MGC).</title>
        <authorList>
            <consortium name="The MGC Project Team"/>
        </authorList>
    </citation>
    <scope>NUCLEOTIDE SEQUENCE [LARGE SCALE MRNA] (ISOFORM 2)</scope>
    <source>
        <tissue>Brain</tissue>
    </source>
</reference>
<reference key="4">
    <citation type="journal article" date="2004" name="Nat. Genet.">
        <title>Complete sequencing and characterization of 21,243 full-length human cDNAs.</title>
        <authorList>
            <person name="Ota T."/>
            <person name="Suzuki Y."/>
            <person name="Nishikawa T."/>
            <person name="Otsuki T."/>
            <person name="Sugiyama T."/>
            <person name="Irie R."/>
            <person name="Wakamatsu A."/>
            <person name="Hayashi K."/>
            <person name="Sato H."/>
            <person name="Nagai K."/>
            <person name="Kimura K."/>
            <person name="Makita H."/>
            <person name="Sekine M."/>
            <person name="Obayashi M."/>
            <person name="Nishi T."/>
            <person name="Shibahara T."/>
            <person name="Tanaka T."/>
            <person name="Ishii S."/>
            <person name="Yamamoto J."/>
            <person name="Saito K."/>
            <person name="Kawai Y."/>
            <person name="Isono Y."/>
            <person name="Nakamura Y."/>
            <person name="Nagahari K."/>
            <person name="Murakami K."/>
            <person name="Yasuda T."/>
            <person name="Iwayanagi T."/>
            <person name="Wagatsuma M."/>
            <person name="Shiratori A."/>
            <person name="Sudo H."/>
            <person name="Hosoiri T."/>
            <person name="Kaku Y."/>
            <person name="Kodaira H."/>
            <person name="Kondo H."/>
            <person name="Sugawara M."/>
            <person name="Takahashi M."/>
            <person name="Kanda K."/>
            <person name="Yokoi T."/>
            <person name="Furuya T."/>
            <person name="Kikkawa E."/>
            <person name="Omura Y."/>
            <person name="Abe K."/>
            <person name="Kamihara K."/>
            <person name="Katsuta N."/>
            <person name="Sato K."/>
            <person name="Tanikawa M."/>
            <person name="Yamazaki M."/>
            <person name="Ninomiya K."/>
            <person name="Ishibashi T."/>
            <person name="Yamashita H."/>
            <person name="Murakawa K."/>
            <person name="Fujimori K."/>
            <person name="Tanai H."/>
            <person name="Kimata M."/>
            <person name="Watanabe M."/>
            <person name="Hiraoka S."/>
            <person name="Chiba Y."/>
            <person name="Ishida S."/>
            <person name="Ono Y."/>
            <person name="Takiguchi S."/>
            <person name="Watanabe S."/>
            <person name="Yosida M."/>
            <person name="Hotuta T."/>
            <person name="Kusano J."/>
            <person name="Kanehori K."/>
            <person name="Takahashi-Fujii A."/>
            <person name="Hara H."/>
            <person name="Tanase T.-O."/>
            <person name="Nomura Y."/>
            <person name="Togiya S."/>
            <person name="Komai F."/>
            <person name="Hara R."/>
            <person name="Takeuchi K."/>
            <person name="Arita M."/>
            <person name="Imose N."/>
            <person name="Musashino K."/>
            <person name="Yuuki H."/>
            <person name="Oshima A."/>
            <person name="Sasaki N."/>
            <person name="Aotsuka S."/>
            <person name="Yoshikawa Y."/>
            <person name="Matsunawa H."/>
            <person name="Ichihara T."/>
            <person name="Shiohata N."/>
            <person name="Sano S."/>
            <person name="Moriya S."/>
            <person name="Momiyama H."/>
            <person name="Satoh N."/>
            <person name="Takami S."/>
            <person name="Terashima Y."/>
            <person name="Suzuki O."/>
            <person name="Nakagawa S."/>
            <person name="Senoh A."/>
            <person name="Mizoguchi H."/>
            <person name="Goto Y."/>
            <person name="Shimizu F."/>
            <person name="Wakebe H."/>
            <person name="Hishigaki H."/>
            <person name="Watanabe T."/>
            <person name="Sugiyama A."/>
            <person name="Takemoto M."/>
            <person name="Kawakami B."/>
            <person name="Yamazaki M."/>
            <person name="Watanabe K."/>
            <person name="Kumagai A."/>
            <person name="Itakura S."/>
            <person name="Fukuzumi Y."/>
            <person name="Fujimori Y."/>
            <person name="Komiyama M."/>
            <person name="Tashiro H."/>
            <person name="Tanigami A."/>
            <person name="Fujiwara T."/>
            <person name="Ono T."/>
            <person name="Yamada K."/>
            <person name="Fujii Y."/>
            <person name="Ozaki K."/>
            <person name="Hirao M."/>
            <person name="Ohmori Y."/>
            <person name="Kawabata A."/>
            <person name="Hikiji T."/>
            <person name="Kobatake N."/>
            <person name="Inagaki H."/>
            <person name="Ikema Y."/>
            <person name="Okamoto S."/>
            <person name="Okitani R."/>
            <person name="Kawakami T."/>
            <person name="Noguchi S."/>
            <person name="Itoh T."/>
            <person name="Shigeta K."/>
            <person name="Senba T."/>
            <person name="Matsumura K."/>
            <person name="Nakajima Y."/>
            <person name="Mizuno T."/>
            <person name="Morinaga M."/>
            <person name="Sasaki M."/>
            <person name="Togashi T."/>
            <person name="Oyama M."/>
            <person name="Hata H."/>
            <person name="Watanabe M."/>
            <person name="Komatsu T."/>
            <person name="Mizushima-Sugano J."/>
            <person name="Satoh T."/>
            <person name="Shirai Y."/>
            <person name="Takahashi Y."/>
            <person name="Nakagawa K."/>
            <person name="Okumura K."/>
            <person name="Nagase T."/>
            <person name="Nomura N."/>
            <person name="Kikuchi H."/>
            <person name="Masuho Y."/>
            <person name="Yamashita R."/>
            <person name="Nakai K."/>
            <person name="Yada T."/>
            <person name="Nakamura Y."/>
            <person name="Ohara O."/>
            <person name="Isogai T."/>
            <person name="Sugano S."/>
        </authorList>
    </citation>
    <scope>NUCLEOTIDE SEQUENCE [LARGE SCALE MRNA] OF 60-578 (ISOFORM 1)</scope>
</reference>
<reference key="5">
    <citation type="journal article" date="2008" name="J. Proteome Res.">
        <title>Phosphoproteome of resting human platelets.</title>
        <authorList>
            <person name="Zahedi R.P."/>
            <person name="Lewandrowski U."/>
            <person name="Wiesner J."/>
            <person name="Wortelkamp S."/>
            <person name="Moebius J."/>
            <person name="Schuetz C."/>
            <person name="Walter U."/>
            <person name="Gambaryan S."/>
            <person name="Sickmann A."/>
        </authorList>
    </citation>
    <scope>PHOSPHORYLATION [LARGE SCALE ANALYSIS] AT SER-299</scope>
    <scope>IDENTIFICATION BY MASS SPECTROMETRY [LARGE SCALE ANALYSIS]</scope>
    <source>
        <tissue>Platelet</tissue>
    </source>
</reference>
<reference key="6">
    <citation type="journal article" date="2008" name="Proc. Natl. Acad. Sci. U.S.A.">
        <title>A quantitative atlas of mitotic phosphorylation.</title>
        <authorList>
            <person name="Dephoure N."/>
            <person name="Zhou C."/>
            <person name="Villen J."/>
            <person name="Beausoleil S.A."/>
            <person name="Bakalarski C.E."/>
            <person name="Elledge S.J."/>
            <person name="Gygi S.P."/>
        </authorList>
    </citation>
    <scope>IDENTIFICATION BY MASS SPECTROMETRY [LARGE SCALE ANALYSIS]</scope>
    <source>
        <tissue>Cervix carcinoma</tissue>
    </source>
</reference>
<reference key="7">
    <citation type="journal article" date="2009" name="Anal. Chem.">
        <title>Lys-N and trypsin cover complementary parts of the phosphoproteome in a refined SCX-based approach.</title>
        <authorList>
            <person name="Gauci S."/>
            <person name="Helbig A.O."/>
            <person name="Slijper M."/>
            <person name="Krijgsveld J."/>
            <person name="Heck A.J."/>
            <person name="Mohammed S."/>
        </authorList>
    </citation>
    <scope>ACETYLATION [LARGE SCALE ANALYSIS] AT MET-1</scope>
    <scope>IDENTIFICATION BY MASS SPECTROMETRY [LARGE SCALE ANALYSIS]</scope>
</reference>
<reference key="8">
    <citation type="journal article" date="2009" name="Genes Dev.">
        <title>A new MIF4G domain-containing protein, CTIF, directs nuclear cap-binding protein CBP80/20-dependent translation.</title>
        <authorList>
            <person name="Kim K.M."/>
            <person name="Cho H."/>
            <person name="Choi K."/>
            <person name="Kim J."/>
            <person name="Kim B.-W."/>
            <person name="Ko Y.-G."/>
            <person name="Jang S.K."/>
            <person name="Kim Y.K."/>
        </authorList>
    </citation>
    <scope>FUNCTION</scope>
    <scope>SUBCELLULAR LOCATION</scope>
    <scope>TISSUE SPECIFICITY</scope>
    <scope>INTERACTION WITH NCBP1</scope>
    <scope>INTERACTION WITH THE EIF-3 COMPLEX</scope>
</reference>
<reference key="9">
    <citation type="journal article" date="2009" name="Sci. Signal.">
        <title>Quantitative phosphoproteomic analysis of T cell receptor signaling reveals system-wide modulation of protein-protein interactions.</title>
        <authorList>
            <person name="Mayya V."/>
            <person name="Lundgren D.H."/>
            <person name="Hwang S.-I."/>
            <person name="Rezaul K."/>
            <person name="Wu L."/>
            <person name="Eng J.K."/>
            <person name="Rodionov V."/>
            <person name="Han D.K."/>
        </authorList>
    </citation>
    <scope>IDENTIFICATION BY MASS SPECTROMETRY [LARGE SCALE ANALYSIS]</scope>
    <source>
        <tissue>Leukemic T-cell</tissue>
    </source>
</reference>
<reference key="10">
    <citation type="journal article" date="2011" name="BMC Syst. Biol.">
        <title>Initial characterization of the human central proteome.</title>
        <authorList>
            <person name="Burkard T.R."/>
            <person name="Planyavsky M."/>
            <person name="Kaupe I."/>
            <person name="Breitwieser F.P."/>
            <person name="Buerckstuemmer T."/>
            <person name="Bennett K.L."/>
            <person name="Superti-Furga G."/>
            <person name="Colinge J."/>
        </authorList>
    </citation>
    <scope>IDENTIFICATION BY MASS SPECTROMETRY [LARGE SCALE ANALYSIS]</scope>
</reference>
<reference key="11">
    <citation type="journal article" date="2012" name="Proc. Natl. Acad. Sci. U.S.A.">
        <title>N-terminal acetylome analyses and functional insights of the N-terminal acetyltransferase NatB.</title>
        <authorList>
            <person name="Van Damme P."/>
            <person name="Lasa M."/>
            <person name="Polevoda B."/>
            <person name="Gazquez C."/>
            <person name="Elosegui-Artola A."/>
            <person name="Kim D.S."/>
            <person name="De Juan-Pardo E."/>
            <person name="Demeyer K."/>
            <person name="Hole K."/>
            <person name="Larrea E."/>
            <person name="Timmerman E."/>
            <person name="Prieto J."/>
            <person name="Arnesen T."/>
            <person name="Sherman F."/>
            <person name="Gevaert K."/>
            <person name="Aldabe R."/>
        </authorList>
    </citation>
    <scope>ACETYLATION [LARGE SCALE ANALYSIS] AT MET-1</scope>
    <scope>IDENTIFICATION BY MASS SPECTROMETRY [LARGE SCALE ANALYSIS]</scope>
</reference>
<reference key="12">
    <citation type="journal article" date="2013" name="J. Proteome Res.">
        <title>Toward a comprehensive characterization of a human cancer cell phosphoproteome.</title>
        <authorList>
            <person name="Zhou H."/>
            <person name="Di Palma S."/>
            <person name="Preisinger C."/>
            <person name="Peng M."/>
            <person name="Polat A.N."/>
            <person name="Heck A.J."/>
            <person name="Mohammed S."/>
        </authorList>
    </citation>
    <scope>PHOSPHORYLATION [LARGE SCALE ANALYSIS] AT SER-18</scope>
    <scope>IDENTIFICATION BY MASS SPECTROMETRY [LARGE SCALE ANALYSIS]</scope>
    <source>
        <tissue>Cervix carcinoma</tissue>
        <tissue>Erythroleukemia</tissue>
    </source>
</reference>
<reference key="13">
    <citation type="journal article" date="2014" name="J. Proteomics">
        <title>An enzyme assisted RP-RPLC approach for in-depth analysis of human liver phosphoproteome.</title>
        <authorList>
            <person name="Bian Y."/>
            <person name="Song C."/>
            <person name="Cheng K."/>
            <person name="Dong M."/>
            <person name="Wang F."/>
            <person name="Huang J."/>
            <person name="Sun D."/>
            <person name="Wang L."/>
            <person name="Ye M."/>
            <person name="Zou H."/>
        </authorList>
    </citation>
    <scope>PHOSPHORYLATION [LARGE SCALE ANALYSIS] AT THR-289 AND SER-299</scope>
    <scope>IDENTIFICATION BY MASS SPECTROMETRY [LARGE SCALE ANALYSIS]</scope>
    <source>
        <tissue>Liver</tissue>
    </source>
</reference>
<reference key="14">
    <citation type="journal article" date="2006" name="Science">
        <title>The consensus coding sequences of human breast and colorectal cancers.</title>
        <authorList>
            <person name="Sjoeblom T."/>
            <person name="Jones S."/>
            <person name="Wood L.D."/>
            <person name="Parsons D.W."/>
            <person name="Lin J."/>
            <person name="Barber T.D."/>
            <person name="Mandelker D."/>
            <person name="Leary R.J."/>
            <person name="Ptak J."/>
            <person name="Silliman N."/>
            <person name="Szabo S."/>
            <person name="Buckhaults P."/>
            <person name="Farrell C."/>
            <person name="Meeh P."/>
            <person name="Markowitz S.D."/>
            <person name="Willis J."/>
            <person name="Dawson D."/>
            <person name="Willson J.K.V."/>
            <person name="Gazdar A.F."/>
            <person name="Hartigan J."/>
            <person name="Wu L."/>
            <person name="Liu C."/>
            <person name="Parmigiani G."/>
            <person name="Park B.H."/>
            <person name="Bachman K.E."/>
            <person name="Papadopoulos N."/>
            <person name="Vogelstein B."/>
            <person name="Kinzler K.W."/>
            <person name="Velculescu V.E."/>
        </authorList>
    </citation>
    <scope>VARIANTS [LARGE SCALE ANALYSIS] LEU-389 AND ILE-438</scope>
</reference>
<protein>
    <recommendedName>
        <fullName>CBP80/20-dependent translation initiation factor</fullName>
    </recommendedName>
</protein>
<comment type="function">
    <text evidence="3">Specifically required for the pioneer round of mRNA translation mediated by the cap-binding complex (CBC), that takes place during or right after mRNA export via the nuclear pore complex (NPC). Acts via its interaction with the NCBP1/CBP80 component of the CBC complex and recruits the 40S small subunit of the ribosome via eIF3. In contrast, it is not involved in steady state translation, that takes place when the CBC complex is replaced by cytoplasmic cap-binding protein eIF4E. Also required for nonsense-mediated mRNA decay (NMD), the pioneer round of mRNA translation mediated by the cap-binding complex playing a central role in nonsense-mediated mRNA decay (NMD).</text>
</comment>
<comment type="subunit">
    <text evidence="3">Interacts with NCBP1/CBP80; the interaction is direct. Associates with the eukaryotic translation initiation factor 3 (eIF-3) complex.</text>
</comment>
<comment type="interaction">
    <interactant intactId="EBI-12180013">
        <id>O43310-2</id>
    </interactant>
    <interactant intactId="EBI-1166928">
        <id>Q8N5M1</id>
        <label>ATPAF2</label>
    </interactant>
    <organismsDiffer>false</organismsDiffer>
    <experiments>3</experiments>
</comment>
<comment type="interaction">
    <interactant intactId="EBI-12180013">
        <id>O43310-2</id>
    </interactant>
    <interactant intactId="EBI-740301">
        <id>Q9NUU7</id>
        <label>DDX19A</label>
    </interactant>
    <organismsDiffer>false</organismsDiffer>
    <experiments>4</experiments>
</comment>
<comment type="interaction">
    <interactant intactId="EBI-12180013">
        <id>O43310-2</id>
    </interactant>
    <interactant intactId="EBI-719232">
        <id>Q9UMR2</id>
        <label>DDX19B</label>
    </interactant>
    <organismsDiffer>false</organismsDiffer>
    <experiments>3</experiments>
</comment>
<comment type="interaction">
    <interactant intactId="EBI-12180013">
        <id>O43310-2</id>
    </interactant>
    <interactant intactId="EBI-5460660">
        <id>Q96MH2</id>
        <label>HEXIM2</label>
    </interactant>
    <organismsDiffer>false</organismsDiffer>
    <experiments>3</experiments>
</comment>
<comment type="interaction">
    <interactant intactId="EBI-12180013">
        <id>O43310-2</id>
    </interactant>
    <interactant intactId="EBI-1777078">
        <id>Q86VS8</id>
        <label>HOOK3</label>
    </interactant>
    <organismsDiffer>false</organismsDiffer>
    <experiments>3</experiments>
</comment>
<comment type="interaction">
    <interactant intactId="EBI-12180013">
        <id>O43310-2</id>
    </interactant>
    <interactant intactId="EBI-9118295">
        <id>A9UHW6-2</id>
        <label>MIF4GD</label>
    </interactant>
    <organismsDiffer>false</organismsDiffer>
    <experiments>3</experiments>
</comment>
<comment type="interaction">
    <interactant intactId="EBI-12180013">
        <id>O43310-2</id>
    </interactant>
    <interactant intactId="EBI-10253121">
        <id>Q6P9E2</id>
        <label>RECK</label>
    </interactant>
    <organismsDiffer>false</organismsDiffer>
    <experiments>3</experiments>
</comment>
<comment type="interaction">
    <interactant intactId="EBI-12180013">
        <id>O43310-2</id>
    </interactant>
    <interactant intactId="EBI-742688">
        <id>Q9NZD8</id>
        <label>SPG21</label>
    </interactant>
    <organismsDiffer>false</organismsDiffer>
    <experiments>3</experiments>
</comment>
<comment type="subcellular location">
    <subcellularLocation>
        <location evidence="3">Cytoplasm</location>
        <location evidence="3">Perinuclear region</location>
    </subcellularLocation>
</comment>
<comment type="alternative products">
    <event type="alternative splicing"/>
    <isoform>
        <id>O43310-1</id>
        <name>1</name>
        <sequence type="displayed"/>
    </isoform>
    <isoform>
        <id>O43310-2</id>
        <name>2</name>
        <sequence type="described" ref="VSP_013774"/>
    </isoform>
</comment>
<comment type="tissue specificity">
    <text evidence="3">Widely expressed.</text>
</comment>
<comment type="similarity">
    <text evidence="5">Belongs to the CTIF family.</text>
</comment>
<comment type="sequence caution" evidence="5">
    <conflict type="erroneous initiation">
        <sequence resource="EMBL-CDS" id="BAA24857"/>
    </conflict>
    <text>Extended N-terminus.</text>
</comment>
<comment type="sequence caution" evidence="5">
    <conflict type="miscellaneous discrepancy">
        <sequence resource="EMBL-CDS" id="BAG53180"/>
    </conflict>
    <text>Aberrant splicing.</text>
</comment>
<organism>
    <name type="scientific">Homo sapiens</name>
    <name type="common">Human</name>
    <dbReference type="NCBI Taxonomy" id="9606"/>
    <lineage>
        <taxon>Eukaryota</taxon>
        <taxon>Metazoa</taxon>
        <taxon>Chordata</taxon>
        <taxon>Craniata</taxon>
        <taxon>Vertebrata</taxon>
        <taxon>Euteleostomi</taxon>
        <taxon>Mammalia</taxon>
        <taxon>Eutheria</taxon>
        <taxon>Euarchontoglires</taxon>
        <taxon>Primates</taxon>
        <taxon>Haplorrhini</taxon>
        <taxon>Catarrhini</taxon>
        <taxon>Hominidae</taxon>
        <taxon>Homo</taxon>
    </lineage>
</organism>
<keyword id="KW-0007">Acetylation</keyword>
<keyword id="KW-0025">Alternative splicing</keyword>
<keyword id="KW-0963">Cytoplasm</keyword>
<keyword id="KW-0866">Nonsense-mediated mRNA decay</keyword>
<keyword id="KW-0597">Phosphoprotein</keyword>
<keyword id="KW-1267">Proteomics identification</keyword>
<keyword id="KW-1185">Reference proteome</keyword>
<keyword id="KW-0810">Translation regulation</keyword>
<dbReference type="EMBL" id="AB007887">
    <property type="protein sequence ID" value="BAA24857.2"/>
    <property type="status" value="ALT_INIT"/>
    <property type="molecule type" value="mRNA"/>
</dbReference>
<dbReference type="EMBL" id="AC022919">
    <property type="status" value="NOT_ANNOTATED_CDS"/>
    <property type="molecule type" value="Genomic_DNA"/>
</dbReference>
<dbReference type="EMBL" id="AC048380">
    <property type="status" value="NOT_ANNOTATED_CDS"/>
    <property type="molecule type" value="Genomic_DNA"/>
</dbReference>
<dbReference type="EMBL" id="AC093567">
    <property type="status" value="NOT_ANNOTATED_CDS"/>
    <property type="molecule type" value="Genomic_DNA"/>
</dbReference>
<dbReference type="EMBL" id="BC042146">
    <property type="protein sequence ID" value="AAH42146.1"/>
    <property type="molecule type" value="mRNA"/>
</dbReference>
<dbReference type="EMBL" id="AK095970">
    <property type="protein sequence ID" value="BAG53180.1"/>
    <property type="status" value="ALT_SEQ"/>
    <property type="molecule type" value="mRNA"/>
</dbReference>
<dbReference type="CCDS" id="CCDS11935.1">
    <molecule id="O43310-1"/>
</dbReference>
<dbReference type="CCDS" id="CCDS45864.1">
    <molecule id="O43310-2"/>
</dbReference>
<dbReference type="RefSeq" id="NP_001135869.1">
    <molecule id="O43310-2"/>
    <property type="nucleotide sequence ID" value="NM_001142397.2"/>
</dbReference>
<dbReference type="RefSeq" id="NP_055587.1">
    <molecule id="O43310-1"/>
    <property type="nucleotide sequence ID" value="NM_014772.3"/>
</dbReference>
<dbReference type="RefSeq" id="XP_006722650.1">
    <molecule id="O43310-2"/>
    <property type="nucleotide sequence ID" value="XM_006722587.4"/>
</dbReference>
<dbReference type="RefSeq" id="XP_006722651.1">
    <molecule id="O43310-2"/>
    <property type="nucleotide sequence ID" value="XM_006722588.5"/>
</dbReference>
<dbReference type="RefSeq" id="XP_006722652.1">
    <property type="nucleotide sequence ID" value="XM_006722589.3"/>
</dbReference>
<dbReference type="RefSeq" id="XP_011524581.1">
    <molecule id="O43310-1"/>
    <property type="nucleotide sequence ID" value="XM_011526279.3"/>
</dbReference>
<dbReference type="RefSeq" id="XP_016881591.1">
    <molecule id="O43310-2"/>
    <property type="nucleotide sequence ID" value="XM_017026102.2"/>
</dbReference>
<dbReference type="RefSeq" id="XP_047293921.1">
    <molecule id="O43310-2"/>
    <property type="nucleotide sequence ID" value="XM_047437965.1"/>
</dbReference>
<dbReference type="RefSeq" id="XP_047293922.1">
    <molecule id="O43310-2"/>
    <property type="nucleotide sequence ID" value="XM_047437966.1"/>
</dbReference>
<dbReference type="RefSeq" id="XP_047293923.1">
    <molecule id="O43310-2"/>
    <property type="nucleotide sequence ID" value="XM_047437967.1"/>
</dbReference>
<dbReference type="RefSeq" id="XP_047293924.1">
    <molecule id="O43310-1"/>
    <property type="nucleotide sequence ID" value="XM_047437968.1"/>
</dbReference>
<dbReference type="RefSeq" id="XP_047293925.1">
    <molecule id="O43310-1"/>
    <property type="nucleotide sequence ID" value="XM_047437969.1"/>
</dbReference>
<dbReference type="RefSeq" id="XP_047293926.1">
    <molecule id="O43310-1"/>
    <property type="nucleotide sequence ID" value="XM_047437970.1"/>
</dbReference>
<dbReference type="RefSeq" id="XP_047293927.1">
    <molecule id="O43310-1"/>
    <property type="nucleotide sequence ID" value="XM_047437971.1"/>
</dbReference>
<dbReference type="RefSeq" id="XP_054175378.1">
    <molecule id="O43310-2"/>
    <property type="nucleotide sequence ID" value="XM_054319403.1"/>
</dbReference>
<dbReference type="RefSeq" id="XP_054175379.1">
    <molecule id="O43310-2"/>
    <property type="nucleotide sequence ID" value="XM_054319404.1"/>
</dbReference>
<dbReference type="RefSeq" id="XP_054175380.1">
    <molecule id="O43310-2"/>
    <property type="nucleotide sequence ID" value="XM_054319405.1"/>
</dbReference>
<dbReference type="RefSeq" id="XP_054175381.1">
    <molecule id="O43310-2"/>
    <property type="nucleotide sequence ID" value="XM_054319406.1"/>
</dbReference>
<dbReference type="RefSeq" id="XP_054175382.1">
    <molecule id="O43310-2"/>
    <property type="nucleotide sequence ID" value="XM_054319407.1"/>
</dbReference>
<dbReference type="RefSeq" id="XP_054175383.1">
    <molecule id="O43310-1"/>
    <property type="nucleotide sequence ID" value="XM_054319408.1"/>
</dbReference>
<dbReference type="RefSeq" id="XP_054175384.1">
    <molecule id="O43310-1"/>
    <property type="nucleotide sequence ID" value="XM_054319409.1"/>
</dbReference>
<dbReference type="RefSeq" id="XP_054175385.1">
    <molecule id="O43310-1"/>
    <property type="nucleotide sequence ID" value="XM_054319410.1"/>
</dbReference>
<dbReference type="RefSeq" id="XP_054175386.1">
    <molecule id="O43310-1"/>
    <property type="nucleotide sequence ID" value="XM_054319411.1"/>
</dbReference>
<dbReference type="RefSeq" id="XP_054187867.1">
    <molecule id="O43310-2"/>
    <property type="nucleotide sequence ID" value="XM_054331892.1"/>
</dbReference>
<dbReference type="RefSeq" id="XP_054187868.1">
    <molecule id="O43310-2"/>
    <property type="nucleotide sequence ID" value="XM_054331893.1"/>
</dbReference>
<dbReference type="RefSeq" id="XP_054187869.1">
    <molecule id="O43310-2"/>
    <property type="nucleotide sequence ID" value="XM_054331894.1"/>
</dbReference>
<dbReference type="RefSeq" id="XP_054187870.1">
    <molecule id="O43310-2"/>
    <property type="nucleotide sequence ID" value="XM_054331895.1"/>
</dbReference>
<dbReference type="RefSeq" id="XP_054187871.1">
    <molecule id="O43310-2"/>
    <property type="nucleotide sequence ID" value="XM_054331896.1"/>
</dbReference>
<dbReference type="RefSeq" id="XP_054187872.1">
    <molecule id="O43310-1"/>
    <property type="nucleotide sequence ID" value="XM_054331897.1"/>
</dbReference>
<dbReference type="RefSeq" id="XP_054187873.1">
    <molecule id="O43310-1"/>
    <property type="nucleotide sequence ID" value="XM_054331898.1"/>
</dbReference>
<dbReference type="RefSeq" id="XP_054187874.1">
    <molecule id="O43310-1"/>
    <property type="nucleotide sequence ID" value="XM_054331899.1"/>
</dbReference>
<dbReference type="RefSeq" id="XP_054187875.1">
    <molecule id="O43310-1"/>
    <property type="nucleotide sequence ID" value="XM_054331900.1"/>
</dbReference>
<dbReference type="SMR" id="O43310"/>
<dbReference type="BioGRID" id="115150">
    <property type="interactions" value="74"/>
</dbReference>
<dbReference type="CORUM" id="O43310"/>
<dbReference type="FunCoup" id="O43310">
    <property type="interactions" value="521"/>
</dbReference>
<dbReference type="IntAct" id="O43310">
    <property type="interactions" value="9"/>
</dbReference>
<dbReference type="STRING" id="9606.ENSP00000372459"/>
<dbReference type="TCDB" id="1.I.1.1.3">
    <property type="family name" value="the nuclear pore complex (npc) family"/>
</dbReference>
<dbReference type="GlyGen" id="O43310">
    <property type="glycosylation" value="3 sites, 2 N-linked glycans (2 sites), 1 O-linked glycan (1 site)"/>
</dbReference>
<dbReference type="iPTMnet" id="O43310"/>
<dbReference type="PhosphoSitePlus" id="O43310"/>
<dbReference type="BioMuta" id="CTIF"/>
<dbReference type="jPOST" id="O43310"/>
<dbReference type="MassIVE" id="O43310"/>
<dbReference type="PaxDb" id="9606-ENSP00000372459"/>
<dbReference type="PeptideAtlas" id="O43310"/>
<dbReference type="ProteomicsDB" id="48885">
    <molecule id="O43310-1"/>
</dbReference>
<dbReference type="ProteomicsDB" id="48886">
    <molecule id="O43310-2"/>
</dbReference>
<dbReference type="Pumba" id="O43310"/>
<dbReference type="Antibodypedia" id="9256">
    <property type="antibodies" value="51 antibodies from 13 providers"/>
</dbReference>
<dbReference type="DNASU" id="9811"/>
<dbReference type="Ensembl" id="ENST00000256413.8">
    <molecule id="O43310-1"/>
    <property type="protein sequence ID" value="ENSP00000256413.3"/>
    <property type="gene ID" value="ENSG00000134030.14"/>
</dbReference>
<dbReference type="Ensembl" id="ENST00000382998.8">
    <molecule id="O43310-2"/>
    <property type="protein sequence ID" value="ENSP00000372459.3"/>
    <property type="gene ID" value="ENSG00000134030.14"/>
</dbReference>
<dbReference type="Ensembl" id="ENST00000634350.1">
    <molecule id="O43310-2"/>
    <property type="protein sequence ID" value="ENSP00000489354.1"/>
    <property type="gene ID" value="ENSG00000282825.2"/>
</dbReference>
<dbReference type="Ensembl" id="ENST00000635228.2">
    <molecule id="O43310-1"/>
    <property type="protein sequence ID" value="ENSP00000489589.1"/>
    <property type="gene ID" value="ENSG00000282825.2"/>
</dbReference>
<dbReference type="GeneID" id="9811"/>
<dbReference type="KEGG" id="hsa:9811"/>
<dbReference type="MANE-Select" id="ENST00000256413.8">
    <property type="protein sequence ID" value="ENSP00000256413.3"/>
    <property type="RefSeq nucleotide sequence ID" value="NM_014772.3"/>
    <property type="RefSeq protein sequence ID" value="NP_055587.1"/>
</dbReference>
<dbReference type="UCSC" id="uc002ldc.4">
    <molecule id="O43310-1"/>
    <property type="organism name" value="human"/>
</dbReference>
<dbReference type="AGR" id="HGNC:23925"/>
<dbReference type="CTD" id="9811"/>
<dbReference type="DisGeNET" id="9811"/>
<dbReference type="GeneCards" id="CTIF"/>
<dbReference type="HGNC" id="HGNC:23925">
    <property type="gene designation" value="CTIF"/>
</dbReference>
<dbReference type="HPA" id="ENSG00000134030">
    <property type="expression patterns" value="Low tissue specificity"/>
</dbReference>
<dbReference type="MIM" id="613178">
    <property type="type" value="gene"/>
</dbReference>
<dbReference type="neXtProt" id="NX_O43310"/>
<dbReference type="OpenTargets" id="ENSG00000134030"/>
<dbReference type="PharmGKB" id="PA134974369"/>
<dbReference type="VEuPathDB" id="HostDB:ENSG00000134030"/>
<dbReference type="eggNOG" id="KOG3942">
    <property type="taxonomic scope" value="Eukaryota"/>
</dbReference>
<dbReference type="GeneTree" id="ENSGT00940000153432"/>
<dbReference type="HOGENOM" id="CLU_031968_1_0_1"/>
<dbReference type="InParanoid" id="O43310"/>
<dbReference type="OMA" id="HISQWTT"/>
<dbReference type="OrthoDB" id="6484979at2759"/>
<dbReference type="PAN-GO" id="O43310">
    <property type="GO annotations" value="3 GO annotations based on evolutionary models"/>
</dbReference>
<dbReference type="PhylomeDB" id="O43310"/>
<dbReference type="TreeFam" id="TF350740"/>
<dbReference type="PathwayCommons" id="O43310"/>
<dbReference type="SignaLink" id="O43310"/>
<dbReference type="BioGRID-ORCS" id="9811">
    <property type="hits" value="15 hits in 1160 CRISPR screens"/>
</dbReference>
<dbReference type="ChiTaRS" id="CTIF">
    <property type="organism name" value="human"/>
</dbReference>
<dbReference type="GenomeRNAi" id="9811"/>
<dbReference type="Pharos" id="O43310">
    <property type="development level" value="Tbio"/>
</dbReference>
<dbReference type="PRO" id="PR:O43310"/>
<dbReference type="Proteomes" id="UP000005640">
    <property type="component" value="Chromosome 18"/>
</dbReference>
<dbReference type="RNAct" id="O43310">
    <property type="molecule type" value="protein"/>
</dbReference>
<dbReference type="Bgee" id="ENSG00000134030">
    <property type="expression patterns" value="Expressed in primary visual cortex and 100 other cell types or tissues"/>
</dbReference>
<dbReference type="ExpressionAtlas" id="O43310">
    <property type="expression patterns" value="baseline and differential"/>
</dbReference>
<dbReference type="GO" id="GO:0005829">
    <property type="term" value="C:cytosol"/>
    <property type="evidence" value="ECO:0000314"/>
    <property type="project" value="HPA"/>
</dbReference>
<dbReference type="GO" id="GO:0048471">
    <property type="term" value="C:perinuclear region of cytoplasm"/>
    <property type="evidence" value="ECO:0000314"/>
    <property type="project" value="UniProtKB"/>
</dbReference>
<dbReference type="GO" id="GO:0003723">
    <property type="term" value="F:RNA binding"/>
    <property type="evidence" value="ECO:0007669"/>
    <property type="project" value="InterPro"/>
</dbReference>
<dbReference type="GO" id="GO:0008494">
    <property type="term" value="F:translation activator activity"/>
    <property type="evidence" value="ECO:0000318"/>
    <property type="project" value="GO_Central"/>
</dbReference>
<dbReference type="GO" id="GO:0000184">
    <property type="term" value="P:nuclear-transcribed mRNA catabolic process, nonsense-mediated decay"/>
    <property type="evidence" value="ECO:0000315"/>
    <property type="project" value="UniProtKB"/>
</dbReference>
<dbReference type="GO" id="GO:0006446">
    <property type="term" value="P:regulation of translational initiation"/>
    <property type="evidence" value="ECO:0000315"/>
    <property type="project" value="UniProtKB"/>
</dbReference>
<dbReference type="FunFam" id="1.25.40.180:FF:000019">
    <property type="entry name" value="CBP80/20-dependent translation initiation factor isoform X2"/>
    <property type="match status" value="1"/>
</dbReference>
<dbReference type="Gene3D" id="1.25.40.180">
    <property type="match status" value="1"/>
</dbReference>
<dbReference type="InterPro" id="IPR016024">
    <property type="entry name" value="ARM-type_fold"/>
</dbReference>
<dbReference type="InterPro" id="IPR003890">
    <property type="entry name" value="MIF4G-like_typ-3"/>
</dbReference>
<dbReference type="InterPro" id="IPR051367">
    <property type="entry name" value="mRNA_TranslReg/HistoneTransl"/>
</dbReference>
<dbReference type="PANTHER" id="PTHR23254:SF16">
    <property type="entry name" value="CBP80_20-DEPENDENT TRANSLATION INITIATION FACTOR"/>
    <property type="match status" value="1"/>
</dbReference>
<dbReference type="PANTHER" id="PTHR23254">
    <property type="entry name" value="EIF4G DOMAIN PROTEIN"/>
    <property type="match status" value="1"/>
</dbReference>
<dbReference type="Pfam" id="PF02854">
    <property type="entry name" value="MIF4G"/>
    <property type="match status" value="1"/>
</dbReference>
<dbReference type="SMART" id="SM00543">
    <property type="entry name" value="MIF4G"/>
    <property type="match status" value="1"/>
</dbReference>
<dbReference type="SUPFAM" id="SSF48371">
    <property type="entry name" value="ARM repeat"/>
    <property type="match status" value="1"/>
</dbReference>
<proteinExistence type="evidence at protein level"/>
<name>CTIF_HUMAN</name>
<feature type="chain" id="PRO_0000050754" description="CBP80/20-dependent translation initiation factor">
    <location>
        <begin position="1"/>
        <end position="598"/>
    </location>
</feature>
<feature type="domain" description="MIF4G">
    <location>
        <begin position="376"/>
        <end position="577"/>
    </location>
</feature>
<feature type="region of interest" description="Interaction with NCBP1/CBP80" evidence="3">
    <location>
        <begin position="1"/>
        <end position="305"/>
    </location>
</feature>
<feature type="region of interest" description="Disordered" evidence="1">
    <location>
        <begin position="1"/>
        <end position="20"/>
    </location>
</feature>
<feature type="region of interest" description="Disordered" evidence="1">
    <location>
        <begin position="43"/>
        <end position="90"/>
    </location>
</feature>
<feature type="region of interest" description="Disordered" evidence="1">
    <location>
        <begin position="180"/>
        <end position="336"/>
    </location>
</feature>
<feature type="compositionally biased region" description="Low complexity" evidence="1">
    <location>
        <begin position="1"/>
        <end position="18"/>
    </location>
</feature>
<feature type="compositionally biased region" description="Basic and acidic residues" evidence="1">
    <location>
        <begin position="43"/>
        <end position="55"/>
    </location>
</feature>
<feature type="compositionally biased region" description="Polar residues" evidence="1">
    <location>
        <begin position="56"/>
        <end position="75"/>
    </location>
</feature>
<feature type="compositionally biased region" description="Basic residues" evidence="1">
    <location>
        <begin position="183"/>
        <end position="198"/>
    </location>
</feature>
<feature type="compositionally biased region" description="Basic and acidic residues" evidence="1">
    <location>
        <begin position="258"/>
        <end position="272"/>
    </location>
</feature>
<feature type="compositionally biased region" description="Basic and acidic residues" evidence="1">
    <location>
        <begin position="321"/>
        <end position="336"/>
    </location>
</feature>
<feature type="modified residue" description="N-acetylmethionine" evidence="7 8">
    <location>
        <position position="1"/>
    </location>
</feature>
<feature type="modified residue" description="Phosphoserine" evidence="9">
    <location>
        <position position="18"/>
    </location>
</feature>
<feature type="modified residue" description="Phosphothreonine" evidence="10">
    <location>
        <position position="289"/>
    </location>
</feature>
<feature type="modified residue" description="Phosphoserine" evidence="6 10">
    <location>
        <position position="299"/>
    </location>
</feature>
<feature type="splice variant" id="VSP_013774" description="In isoform 2." evidence="4">
    <original>K</original>
    <variation>KVP</variation>
    <location>
        <position position="357"/>
    </location>
</feature>
<feature type="sequence variant" id="VAR_020041" description="In dbSNP:rs2277712.">
    <original>P</original>
    <variation>L</variation>
    <location>
        <position position="82"/>
    </location>
</feature>
<feature type="sequence variant" id="VAR_035749" description="In a breast cancer sample; somatic mutation; dbSNP:rs751006365." evidence="2">
    <original>V</original>
    <variation>L</variation>
    <location>
        <position position="389"/>
    </location>
</feature>
<feature type="sequence variant" id="VAR_035750" description="In a breast cancer sample; somatic mutation." evidence="2">
    <original>M</original>
    <variation>I</variation>
    <location>
        <position position="438"/>
    </location>
</feature>